<protein>
    <recommendedName>
        <fullName evidence="1">Galactose-1-phosphate uridylyltransferase</fullName>
        <shortName evidence="1">Gal-1-P uridylyltransferase</shortName>
        <ecNumber evidence="1">2.7.7.12</ecNumber>
    </recommendedName>
    <alternativeName>
        <fullName evidence="1">UDP-glucose--hexose-1-phosphate uridylyltransferase</fullName>
    </alternativeName>
</protein>
<comment type="catalytic activity">
    <reaction evidence="1">
        <text>alpha-D-galactose 1-phosphate + UDP-alpha-D-glucose = alpha-D-glucose 1-phosphate + UDP-alpha-D-galactose</text>
        <dbReference type="Rhea" id="RHEA:13989"/>
        <dbReference type="ChEBI" id="CHEBI:58336"/>
        <dbReference type="ChEBI" id="CHEBI:58601"/>
        <dbReference type="ChEBI" id="CHEBI:58885"/>
        <dbReference type="ChEBI" id="CHEBI:66914"/>
        <dbReference type="EC" id="2.7.7.12"/>
    </reaction>
</comment>
<comment type="pathway">
    <text evidence="1">Carbohydrate metabolism; galactose metabolism.</text>
</comment>
<comment type="subcellular location">
    <subcellularLocation>
        <location evidence="1">Cytoplasm</location>
    </subcellularLocation>
</comment>
<comment type="similarity">
    <text evidence="1">Belongs to the galactose-1-phosphate uridylyltransferase type 2 family.</text>
</comment>
<accession>C1CMG3</accession>
<organism>
    <name type="scientific">Streptococcus pneumoniae (strain P1031)</name>
    <dbReference type="NCBI Taxonomy" id="488223"/>
    <lineage>
        <taxon>Bacteria</taxon>
        <taxon>Bacillati</taxon>
        <taxon>Bacillota</taxon>
        <taxon>Bacilli</taxon>
        <taxon>Lactobacillales</taxon>
        <taxon>Streptococcaceae</taxon>
        <taxon>Streptococcus</taxon>
    </lineage>
</organism>
<keyword id="KW-0119">Carbohydrate metabolism</keyword>
<keyword id="KW-0963">Cytoplasm</keyword>
<keyword id="KW-0299">Galactose metabolism</keyword>
<keyword id="KW-0548">Nucleotidyltransferase</keyword>
<keyword id="KW-0808">Transferase</keyword>
<dbReference type="EC" id="2.7.7.12" evidence="1"/>
<dbReference type="EMBL" id="CP000920">
    <property type="protein sequence ID" value="ACO20459.1"/>
    <property type="molecule type" value="Genomic_DNA"/>
</dbReference>
<dbReference type="RefSeq" id="WP_000177001.1">
    <property type="nucleotide sequence ID" value="NC_012467.1"/>
</dbReference>
<dbReference type="KEGG" id="spp:SPP_1852"/>
<dbReference type="HOGENOM" id="CLU_047799_0_0_9"/>
<dbReference type="UniPathway" id="UPA00214"/>
<dbReference type="GO" id="GO:0005737">
    <property type="term" value="C:cytoplasm"/>
    <property type="evidence" value="ECO:0007669"/>
    <property type="project" value="UniProtKB-SubCell"/>
</dbReference>
<dbReference type="GO" id="GO:0008108">
    <property type="term" value="F:UDP-glucose:hexose-1-phosphate uridylyltransferase activity"/>
    <property type="evidence" value="ECO:0007669"/>
    <property type="project" value="UniProtKB-UniRule"/>
</dbReference>
<dbReference type="GO" id="GO:0006012">
    <property type="term" value="P:galactose metabolic process"/>
    <property type="evidence" value="ECO:0007669"/>
    <property type="project" value="UniProtKB-UniRule"/>
</dbReference>
<dbReference type="HAMAP" id="MF_00571">
    <property type="entry name" value="GalP_UDP_trans"/>
    <property type="match status" value="1"/>
</dbReference>
<dbReference type="InterPro" id="IPR000766">
    <property type="entry name" value="GalP_uridyl_Trfase_II"/>
</dbReference>
<dbReference type="InterPro" id="IPR023425">
    <property type="entry name" value="GalP_uridyl_Trfase_II_CS"/>
</dbReference>
<dbReference type="InterPro" id="IPR005850">
    <property type="entry name" value="GalP_Utransf_C"/>
</dbReference>
<dbReference type="InterPro" id="IPR005849">
    <property type="entry name" value="GalP_Utransf_N"/>
</dbReference>
<dbReference type="NCBIfam" id="TIGR01239">
    <property type="entry name" value="galT_2"/>
    <property type="match status" value="1"/>
</dbReference>
<dbReference type="NCBIfam" id="NF003628">
    <property type="entry name" value="PRK05270.1-1"/>
    <property type="match status" value="1"/>
</dbReference>
<dbReference type="NCBIfam" id="NF003629">
    <property type="entry name" value="PRK05270.1-2"/>
    <property type="match status" value="1"/>
</dbReference>
<dbReference type="NCBIfam" id="NF003631">
    <property type="entry name" value="PRK05270.1-5"/>
    <property type="match status" value="1"/>
</dbReference>
<dbReference type="NCBIfam" id="NF003633">
    <property type="entry name" value="PRK05270.2-2"/>
    <property type="match status" value="1"/>
</dbReference>
<dbReference type="PANTHER" id="PTHR39191:SF1">
    <property type="entry name" value="DUF4922 DOMAIN-CONTAINING PROTEIN"/>
    <property type="match status" value="1"/>
</dbReference>
<dbReference type="PANTHER" id="PTHR39191">
    <property type="entry name" value="GALACTOSE-1-PHOSPHATE URIDYLYLTRANSFERASE"/>
    <property type="match status" value="1"/>
</dbReference>
<dbReference type="Pfam" id="PF02744">
    <property type="entry name" value="GalP_UDP_tr_C"/>
    <property type="match status" value="1"/>
</dbReference>
<dbReference type="Pfam" id="PF01087">
    <property type="entry name" value="GalP_UDP_transf"/>
    <property type="match status" value="1"/>
</dbReference>
<dbReference type="PIRSF" id="PIRSF006005">
    <property type="entry name" value="GalT_BS"/>
    <property type="match status" value="1"/>
</dbReference>
<dbReference type="PROSITE" id="PS01163">
    <property type="entry name" value="GAL_P_UDP_TRANSF_II"/>
    <property type="match status" value="1"/>
</dbReference>
<gene>
    <name evidence="1" type="primary">galT</name>
    <name type="ordered locus">SPP_1852</name>
</gene>
<reference key="1">
    <citation type="journal article" date="2010" name="Genome Biol.">
        <title>Structure and dynamics of the pan-genome of Streptococcus pneumoniae and closely related species.</title>
        <authorList>
            <person name="Donati C."/>
            <person name="Hiller N.L."/>
            <person name="Tettelin H."/>
            <person name="Muzzi A."/>
            <person name="Croucher N.J."/>
            <person name="Angiuoli S.V."/>
            <person name="Oggioni M."/>
            <person name="Dunning Hotopp J.C."/>
            <person name="Hu F.Z."/>
            <person name="Riley D.R."/>
            <person name="Covacci A."/>
            <person name="Mitchell T.J."/>
            <person name="Bentley S.D."/>
            <person name="Kilian M."/>
            <person name="Ehrlich G.D."/>
            <person name="Rappuoli R."/>
            <person name="Moxon E.R."/>
            <person name="Masignani V."/>
        </authorList>
    </citation>
    <scope>NUCLEOTIDE SEQUENCE [LARGE SCALE GENOMIC DNA]</scope>
    <source>
        <strain>P1031</strain>
    </source>
</reference>
<evidence type="ECO:0000255" key="1">
    <source>
        <dbReference type="HAMAP-Rule" id="MF_00571"/>
    </source>
</evidence>
<name>GALT_STRZP</name>
<feature type="chain" id="PRO_1000190066" description="Galactose-1-phosphate uridylyltransferase">
    <location>
        <begin position="1"/>
        <end position="493"/>
    </location>
</feature>
<sequence length="493" mass="56234">MTLVDKFVTHVISESSFEEMDRIYLTNRVLARVGEGVLEVETNLDKLIDLKDQLVEEAVRLETIEDSQTAREILGTELMDLVTPCPSQVNRDFWEAYAYSPEQAIEDFYQLSRKNDYIKLKAIAKNIAYRVPSDYGELEITINLSKPEKDPKEIAVAKLVQASNYPQCQLCLENEGYHGRVNHPARSNHRIIRFEMVGQEWGFQYSPYAYFNEHCIFLDGQHRPMAISRQSFERLLAIVEQFPGYFAGSNADLPIVGGSILTHDHYQGGRHVFPMELAPLQKTFRFAGFEQVKAGIIKWPMSVLRLTSDSKEDLINLADKIFQEWRQYSDSSVQILAETDGTPHHTITPIARKRDGQFELDLVLRDNQTSAEHPDGIYHPHKDVQHIKKENIGLIEVMGLAILPPRLKEEVEQVASYLVGEAVTVADYHQEWADQLKSQHPDLTDKEKALAIVKDSVGAIFVRVLEDAGVYKQTEQGQTAFMRFVEQVGILLD</sequence>
<proteinExistence type="inferred from homology"/>